<sequence length="446" mass="50841">MPKRTFTKDDIRKFAEEENVRYLRLQFTDILGTIKNVEVPVSQLEKVLDNEMMFDGSSIEGFVRIEESDMYLHPDLDTWVIFPWTAGQGKVARLICDVYKTDGTPFEGDPRANLKRVLKEMEDLGFTDFNLGPEPEFFLFKLDEKGEPTLELNDDGGYFDLAPTDLGENCRRDIVLELEDMGFDIEASHHEVAPGQHEIDFKYADAVTACDNIQTFKLVVKTIARKHNLHATFMPKPLFGVNGSGMHFNVSLFKGKENAFFDPNTEMGLTETAYQFTAGVLKNARGFTAVCNPLVNSYKRLVPGYEAPCYIAWSGKNRSPLIRVPSSRGLSTRIEVRSVDPAANPYMALAAILEAGLDGIKNKLKVPEPVNQNIYEMNREEREAVGIQDLPSTLYTALKAMRENEVIKKALGNHIYNQFINSKSIEWDYYRTQVSEWERDQYMKQY</sequence>
<protein>
    <recommendedName>
        <fullName evidence="2">Glutamine synthetase</fullName>
        <shortName evidence="2">GS</shortName>
        <ecNumber evidence="2">6.3.1.2</ecNumber>
    </recommendedName>
    <alternativeName>
        <fullName evidence="2">Glutamate--ammonia ligase</fullName>
    </alternativeName>
    <alternativeName>
        <fullName evidence="2">Glutamine synthetase I alpha</fullName>
        <shortName evidence="2">GSI alpha</shortName>
    </alternativeName>
</protein>
<dbReference type="EC" id="6.3.1.2" evidence="2"/>
<dbReference type="EMBL" id="CP000046">
    <property type="protein sequence ID" value="AAW36580.1"/>
    <property type="molecule type" value="Genomic_DNA"/>
</dbReference>
<dbReference type="RefSeq" id="WP_001126603.1">
    <property type="nucleotide sequence ID" value="NZ_JBGOFO010000002.1"/>
</dbReference>
<dbReference type="SMR" id="Q5HGC3"/>
<dbReference type="GeneID" id="98345625"/>
<dbReference type="KEGG" id="sac:SACOL1329"/>
<dbReference type="HOGENOM" id="CLU_017290_1_3_9"/>
<dbReference type="Proteomes" id="UP000000530">
    <property type="component" value="Chromosome"/>
</dbReference>
<dbReference type="GO" id="GO:0005737">
    <property type="term" value="C:cytoplasm"/>
    <property type="evidence" value="ECO:0007669"/>
    <property type="project" value="UniProtKB-SubCell"/>
</dbReference>
<dbReference type="GO" id="GO:0005524">
    <property type="term" value="F:ATP binding"/>
    <property type="evidence" value="ECO:0007669"/>
    <property type="project" value="UniProtKB-KW"/>
</dbReference>
<dbReference type="GO" id="GO:0004356">
    <property type="term" value="F:glutamine synthetase activity"/>
    <property type="evidence" value="ECO:0007669"/>
    <property type="project" value="UniProtKB-EC"/>
</dbReference>
<dbReference type="GO" id="GO:0046872">
    <property type="term" value="F:metal ion binding"/>
    <property type="evidence" value="ECO:0007669"/>
    <property type="project" value="UniProtKB-KW"/>
</dbReference>
<dbReference type="GO" id="GO:0006542">
    <property type="term" value="P:glutamine biosynthetic process"/>
    <property type="evidence" value="ECO:0007669"/>
    <property type="project" value="InterPro"/>
</dbReference>
<dbReference type="FunFam" id="3.10.20.70:FF:000005">
    <property type="entry name" value="Glutamine synthetase"/>
    <property type="match status" value="1"/>
</dbReference>
<dbReference type="FunFam" id="3.30.590.10:FF:000003">
    <property type="entry name" value="Glutamine synthetase 2"/>
    <property type="match status" value="1"/>
</dbReference>
<dbReference type="Gene3D" id="3.10.20.70">
    <property type="entry name" value="Glutamine synthetase, N-terminal domain"/>
    <property type="match status" value="1"/>
</dbReference>
<dbReference type="Gene3D" id="3.30.590.10">
    <property type="entry name" value="Glutamine synthetase/guanido kinase, catalytic domain"/>
    <property type="match status" value="1"/>
</dbReference>
<dbReference type="InterPro" id="IPR008147">
    <property type="entry name" value="Gln_synt_N"/>
</dbReference>
<dbReference type="InterPro" id="IPR036651">
    <property type="entry name" value="Gln_synt_N_sf"/>
</dbReference>
<dbReference type="InterPro" id="IPR014746">
    <property type="entry name" value="Gln_synth/guanido_kin_cat_dom"/>
</dbReference>
<dbReference type="InterPro" id="IPR008146">
    <property type="entry name" value="Gln_synth_cat_dom"/>
</dbReference>
<dbReference type="InterPro" id="IPR027303">
    <property type="entry name" value="Gln_synth_gly_rich_site"/>
</dbReference>
<dbReference type="InterPro" id="IPR004809">
    <property type="entry name" value="Gln_synth_I"/>
</dbReference>
<dbReference type="InterPro" id="IPR027302">
    <property type="entry name" value="Gln_synth_N_conserv_site"/>
</dbReference>
<dbReference type="NCBIfam" id="TIGR00653">
    <property type="entry name" value="GlnA"/>
    <property type="match status" value="1"/>
</dbReference>
<dbReference type="PANTHER" id="PTHR43785">
    <property type="entry name" value="GAMMA-GLUTAMYLPUTRESCINE SYNTHETASE"/>
    <property type="match status" value="1"/>
</dbReference>
<dbReference type="PANTHER" id="PTHR43785:SF12">
    <property type="entry name" value="TYPE-1 GLUTAMINE SYNTHETASE 2"/>
    <property type="match status" value="1"/>
</dbReference>
<dbReference type="Pfam" id="PF00120">
    <property type="entry name" value="Gln-synt_C"/>
    <property type="match status" value="1"/>
</dbReference>
<dbReference type="Pfam" id="PF03951">
    <property type="entry name" value="Gln-synt_N"/>
    <property type="match status" value="1"/>
</dbReference>
<dbReference type="SMART" id="SM01230">
    <property type="entry name" value="Gln-synt_C"/>
    <property type="match status" value="1"/>
</dbReference>
<dbReference type="SUPFAM" id="SSF54368">
    <property type="entry name" value="Glutamine synthetase, N-terminal domain"/>
    <property type="match status" value="1"/>
</dbReference>
<dbReference type="SUPFAM" id="SSF55931">
    <property type="entry name" value="Glutamine synthetase/guanido kinase"/>
    <property type="match status" value="1"/>
</dbReference>
<dbReference type="PROSITE" id="PS00180">
    <property type="entry name" value="GLNA_1"/>
    <property type="match status" value="1"/>
</dbReference>
<dbReference type="PROSITE" id="PS00181">
    <property type="entry name" value="GLNA_ATP"/>
    <property type="match status" value="1"/>
</dbReference>
<dbReference type="PROSITE" id="PS51986">
    <property type="entry name" value="GS_BETA_GRASP"/>
    <property type="match status" value="1"/>
</dbReference>
<dbReference type="PROSITE" id="PS51987">
    <property type="entry name" value="GS_CATALYTIC"/>
    <property type="match status" value="1"/>
</dbReference>
<feature type="chain" id="PRO_0000153257" description="Glutamine synthetase">
    <location>
        <begin position="1"/>
        <end position="446"/>
    </location>
</feature>
<feature type="domain" description="GS beta-grasp" evidence="5">
    <location>
        <begin position="18"/>
        <end position="103"/>
    </location>
</feature>
<feature type="domain" description="GS catalytic" evidence="6">
    <location>
        <begin position="110"/>
        <end position="446"/>
    </location>
</feature>
<feature type="binding site" evidence="2">
    <location>
        <position position="134"/>
    </location>
    <ligand>
        <name>Mg(2+)</name>
        <dbReference type="ChEBI" id="CHEBI:18420"/>
        <label>1</label>
    </ligand>
</feature>
<feature type="binding site" evidence="2">
    <location>
        <position position="136"/>
    </location>
    <ligand>
        <name>Mg(2+)</name>
        <dbReference type="ChEBI" id="CHEBI:18420"/>
        <label>2</label>
    </ligand>
</feature>
<feature type="binding site" evidence="4">
    <location>
        <position position="186"/>
    </location>
    <ligand>
        <name>ATP</name>
        <dbReference type="ChEBI" id="CHEBI:30616"/>
    </ligand>
</feature>
<feature type="binding site" evidence="2">
    <location>
        <position position="191"/>
    </location>
    <ligand>
        <name>Mg(2+)</name>
        <dbReference type="ChEBI" id="CHEBI:18420"/>
        <label>2</label>
    </ligand>
</feature>
<feature type="binding site" evidence="2">
    <location>
        <position position="198"/>
    </location>
    <ligand>
        <name>Mg(2+)</name>
        <dbReference type="ChEBI" id="CHEBI:18420"/>
        <label>2</label>
    </ligand>
</feature>
<feature type="binding site" evidence="4">
    <location>
        <begin position="242"/>
        <end position="243"/>
    </location>
    <ligand>
        <name>L-glutamate</name>
        <dbReference type="ChEBI" id="CHEBI:29985"/>
    </ligand>
</feature>
<feature type="binding site" evidence="2">
    <location>
        <position position="243"/>
    </location>
    <ligand>
        <name>L-glutamate</name>
        <dbReference type="ChEBI" id="CHEBI:29985"/>
    </ligand>
</feature>
<feature type="binding site" evidence="2">
    <location>
        <position position="247"/>
    </location>
    <ligand>
        <name>Mg(2+)</name>
        <dbReference type="ChEBI" id="CHEBI:18420"/>
        <label>1</label>
    </ligand>
</feature>
<feature type="binding site" evidence="3">
    <location>
        <position position="251"/>
    </location>
    <ligand>
        <name>ATP</name>
        <dbReference type="ChEBI" id="CHEBI:30616"/>
    </ligand>
</feature>
<feature type="binding site" evidence="1">
    <location>
        <position position="300"/>
    </location>
    <ligand>
        <name>L-glutamate</name>
        <dbReference type="ChEBI" id="CHEBI:29985"/>
    </ligand>
</feature>
<feature type="binding site" evidence="1">
    <location>
        <position position="306"/>
    </location>
    <ligand>
        <name>L-glutamate</name>
        <dbReference type="ChEBI" id="CHEBI:29985"/>
    </ligand>
</feature>
<feature type="binding site" evidence="4">
    <location>
        <position position="318"/>
    </location>
    <ligand>
        <name>ATP</name>
        <dbReference type="ChEBI" id="CHEBI:30616"/>
    </ligand>
</feature>
<feature type="binding site" evidence="4">
    <location>
        <position position="318"/>
    </location>
    <ligand>
        <name>L-glutamate</name>
        <dbReference type="ChEBI" id="CHEBI:29985"/>
    </ligand>
</feature>
<feature type="binding site" evidence="4">
    <location>
        <position position="323"/>
    </location>
    <ligand>
        <name>ATP</name>
        <dbReference type="ChEBI" id="CHEBI:30616"/>
    </ligand>
</feature>
<feature type="binding site" evidence="2">
    <location>
        <position position="335"/>
    </location>
    <ligand>
        <name>Mg(2+)</name>
        <dbReference type="ChEBI" id="CHEBI:18420"/>
        <label>1</label>
    </ligand>
</feature>
<feature type="binding site" evidence="1">
    <location>
        <position position="337"/>
    </location>
    <ligand>
        <name>L-glutamate</name>
        <dbReference type="ChEBI" id="CHEBI:29985"/>
    </ligand>
</feature>
<feature type="site" description="Important for inhibition by glutamine" evidence="2">
    <location>
        <position position="64"/>
    </location>
</feature>
<accession>Q5HGC3</accession>
<name>GLN1A_STAAC</name>
<comment type="function">
    <text evidence="2">Glutamine synthetase (GS) is an unusual multitasking protein that functions as an enzyme, a transcription coregulator, and a chaperone in ammonium assimilation and in the regulation of genes involved in nitrogen metabolism. It catalyzes the ATP-dependent biosynthesis of glutamine from glutamate and ammonia. Feedback-inhibited GlnA also interacts with and regulates the activity of the transcriptional regulator TnrA. During nitrogen limitation, TnrA is in its DNA-binding active state and turns on the transcription of genes required for nitrogen assimilation. Under conditions of nitrogen excess, feedback-inhibited GlnA forms a stable complex with TnrA, which inhibits its DNA-binding activity. In contrast, feedback-inhibited GlnA acts as a chaperone to stabilize the DNA-binding activity of GlnR, which represses the transcription of nitrogen assimilation genes.</text>
</comment>
<comment type="catalytic activity">
    <reaction evidence="2">
        <text>L-glutamate + NH4(+) + ATP = L-glutamine + ADP + phosphate + H(+)</text>
        <dbReference type="Rhea" id="RHEA:16169"/>
        <dbReference type="ChEBI" id="CHEBI:15378"/>
        <dbReference type="ChEBI" id="CHEBI:28938"/>
        <dbReference type="ChEBI" id="CHEBI:29985"/>
        <dbReference type="ChEBI" id="CHEBI:30616"/>
        <dbReference type="ChEBI" id="CHEBI:43474"/>
        <dbReference type="ChEBI" id="CHEBI:58359"/>
        <dbReference type="ChEBI" id="CHEBI:456216"/>
        <dbReference type="EC" id="6.3.1.2"/>
    </reaction>
</comment>
<comment type="cofactor">
    <cofactor evidence="2">
        <name>Mg(2+)</name>
        <dbReference type="ChEBI" id="CHEBI:18420"/>
    </cofactor>
    <text evidence="2">Binds 2 Mg(2+) ions per subunit.</text>
</comment>
<comment type="activity regulation">
    <text evidence="2">Inhibited by glutamine.</text>
</comment>
<comment type="subunit">
    <text evidence="2">Oligomer of 12 subunits arranged in the form of two hexagons. In its feedback-inhibited form, interacts with TnrA in order to block its DNA-binding activity.</text>
</comment>
<comment type="subcellular location">
    <subcellularLocation>
        <location evidence="2">Cytoplasm</location>
    </subcellularLocation>
</comment>
<comment type="similarity">
    <text evidence="7">Belongs to the glutamine synthetase family.</text>
</comment>
<evidence type="ECO:0000250" key="1">
    <source>
        <dbReference type="UniProtKB" id="P0A1P6"/>
    </source>
</evidence>
<evidence type="ECO:0000250" key="2">
    <source>
        <dbReference type="UniProtKB" id="P12425"/>
    </source>
</evidence>
<evidence type="ECO:0000250" key="3">
    <source>
        <dbReference type="UniProtKB" id="P77961"/>
    </source>
</evidence>
<evidence type="ECO:0000250" key="4">
    <source>
        <dbReference type="UniProtKB" id="P9WN39"/>
    </source>
</evidence>
<evidence type="ECO:0000255" key="5">
    <source>
        <dbReference type="PROSITE-ProRule" id="PRU01330"/>
    </source>
</evidence>
<evidence type="ECO:0000255" key="6">
    <source>
        <dbReference type="PROSITE-ProRule" id="PRU01331"/>
    </source>
</evidence>
<evidence type="ECO:0000305" key="7"/>
<reference key="1">
    <citation type="journal article" date="2005" name="J. Bacteriol.">
        <title>Insights on evolution of virulence and resistance from the complete genome analysis of an early methicillin-resistant Staphylococcus aureus strain and a biofilm-producing methicillin-resistant Staphylococcus epidermidis strain.</title>
        <authorList>
            <person name="Gill S.R."/>
            <person name="Fouts D.E."/>
            <person name="Archer G.L."/>
            <person name="Mongodin E.F."/>
            <person name="DeBoy R.T."/>
            <person name="Ravel J."/>
            <person name="Paulsen I.T."/>
            <person name="Kolonay J.F."/>
            <person name="Brinkac L.M."/>
            <person name="Beanan M.J."/>
            <person name="Dodson R.J."/>
            <person name="Daugherty S.C."/>
            <person name="Madupu R."/>
            <person name="Angiuoli S.V."/>
            <person name="Durkin A.S."/>
            <person name="Haft D.H."/>
            <person name="Vamathevan J.J."/>
            <person name="Khouri H."/>
            <person name="Utterback T.R."/>
            <person name="Lee C."/>
            <person name="Dimitrov G."/>
            <person name="Jiang L."/>
            <person name="Qin H."/>
            <person name="Weidman J."/>
            <person name="Tran K."/>
            <person name="Kang K.H."/>
            <person name="Hance I.R."/>
            <person name="Nelson K.E."/>
            <person name="Fraser C.M."/>
        </authorList>
    </citation>
    <scope>NUCLEOTIDE SEQUENCE [LARGE SCALE GENOMIC DNA]</scope>
    <source>
        <strain>COL</strain>
    </source>
</reference>
<gene>
    <name evidence="2" type="primary">glnA</name>
    <name type="ordered locus">SACOL1329</name>
</gene>
<proteinExistence type="inferred from homology"/>
<organism>
    <name type="scientific">Staphylococcus aureus (strain COL)</name>
    <dbReference type="NCBI Taxonomy" id="93062"/>
    <lineage>
        <taxon>Bacteria</taxon>
        <taxon>Bacillati</taxon>
        <taxon>Bacillota</taxon>
        <taxon>Bacilli</taxon>
        <taxon>Bacillales</taxon>
        <taxon>Staphylococcaceae</taxon>
        <taxon>Staphylococcus</taxon>
    </lineage>
</organism>
<keyword id="KW-0067">ATP-binding</keyword>
<keyword id="KW-0963">Cytoplasm</keyword>
<keyword id="KW-0436">Ligase</keyword>
<keyword id="KW-0460">Magnesium</keyword>
<keyword id="KW-0479">Metal-binding</keyword>
<keyword id="KW-0547">Nucleotide-binding</keyword>